<name>MSRQ_SALTI</name>
<proteinExistence type="inferred from homology"/>
<reference key="1">
    <citation type="journal article" date="2001" name="Nature">
        <title>Complete genome sequence of a multiple drug resistant Salmonella enterica serovar Typhi CT18.</title>
        <authorList>
            <person name="Parkhill J."/>
            <person name="Dougan G."/>
            <person name="James K.D."/>
            <person name="Thomson N.R."/>
            <person name="Pickard D."/>
            <person name="Wain J."/>
            <person name="Churcher C.M."/>
            <person name="Mungall K.L."/>
            <person name="Bentley S.D."/>
            <person name="Holden M.T.G."/>
            <person name="Sebaihia M."/>
            <person name="Baker S."/>
            <person name="Basham D."/>
            <person name="Brooks K."/>
            <person name="Chillingworth T."/>
            <person name="Connerton P."/>
            <person name="Cronin A."/>
            <person name="Davis P."/>
            <person name="Davies R.M."/>
            <person name="Dowd L."/>
            <person name="White N."/>
            <person name="Farrar J."/>
            <person name="Feltwell T."/>
            <person name="Hamlin N."/>
            <person name="Haque A."/>
            <person name="Hien T.T."/>
            <person name="Holroyd S."/>
            <person name="Jagels K."/>
            <person name="Krogh A."/>
            <person name="Larsen T.S."/>
            <person name="Leather S."/>
            <person name="Moule S."/>
            <person name="O'Gaora P."/>
            <person name="Parry C."/>
            <person name="Quail M.A."/>
            <person name="Rutherford K.M."/>
            <person name="Simmonds M."/>
            <person name="Skelton J."/>
            <person name="Stevens K."/>
            <person name="Whitehead S."/>
            <person name="Barrell B.G."/>
        </authorList>
    </citation>
    <scope>NUCLEOTIDE SEQUENCE [LARGE SCALE GENOMIC DNA]</scope>
    <source>
        <strain>CT18</strain>
    </source>
</reference>
<reference key="2">
    <citation type="journal article" date="2003" name="J. Bacteriol.">
        <title>Comparative genomics of Salmonella enterica serovar Typhi strains Ty2 and CT18.</title>
        <authorList>
            <person name="Deng W."/>
            <person name="Liou S.-R."/>
            <person name="Plunkett G. III"/>
            <person name="Mayhew G.F."/>
            <person name="Rose D.J."/>
            <person name="Burland V."/>
            <person name="Kodoyianni V."/>
            <person name="Schwartz D.C."/>
            <person name="Blattner F.R."/>
        </authorList>
    </citation>
    <scope>NUCLEOTIDE SEQUENCE [LARGE SCALE GENOMIC DNA]</scope>
    <source>
        <strain>ATCC 700931 / Ty2</strain>
    </source>
</reference>
<feature type="chain" id="PRO_0000091583" description="Protein-methionine-sulfoxide reductase heme-binding subunit MsrQ">
    <location>
        <begin position="1"/>
        <end position="199"/>
    </location>
</feature>
<feature type="transmembrane region" description="Helical" evidence="1">
    <location>
        <begin position="10"/>
        <end position="30"/>
    </location>
</feature>
<feature type="transmembrane region" description="Helical" evidence="1">
    <location>
        <begin position="82"/>
        <end position="102"/>
    </location>
</feature>
<feature type="transmembrane region" description="Helical" evidence="1">
    <location>
        <begin position="116"/>
        <end position="136"/>
    </location>
</feature>
<feature type="transmembrane region" description="Helical" evidence="1">
    <location>
        <begin position="153"/>
        <end position="173"/>
    </location>
</feature>
<sequence>MRLTVKQITWLKVCLHLAGFLPLLWLFWAINHGGLSADPVKDIQHFTGRTALKFLLATLLVSPLARYAKQPLLIRTRRLLGLWCFVWATLHLTSYALLELGIHNLALLGSELISRPYLTLGIISWLVLLALTLTSTQFAQRKLGKRWQTLHNVVYLVAILAPIHYLWSVKILSPQPVIYAALALALLALRYRKFRQWWR</sequence>
<organism>
    <name type="scientific">Salmonella typhi</name>
    <dbReference type="NCBI Taxonomy" id="90370"/>
    <lineage>
        <taxon>Bacteria</taxon>
        <taxon>Pseudomonadati</taxon>
        <taxon>Pseudomonadota</taxon>
        <taxon>Gammaproteobacteria</taxon>
        <taxon>Enterobacterales</taxon>
        <taxon>Enterobacteriaceae</taxon>
        <taxon>Salmonella</taxon>
    </lineage>
</organism>
<protein>
    <recommendedName>
        <fullName evidence="1">Protein-methionine-sulfoxide reductase heme-binding subunit MsrQ</fullName>
    </recommendedName>
    <alternativeName>
        <fullName evidence="1">Flavocytochrome MsrQ</fullName>
    </alternativeName>
</protein>
<dbReference type="EMBL" id="AL513382">
    <property type="protein sequence ID" value="CAD07893.1"/>
    <property type="molecule type" value="Genomic_DNA"/>
</dbReference>
<dbReference type="EMBL" id="AE014613">
    <property type="protein sequence ID" value="AAO70828.1"/>
    <property type="molecule type" value="Genomic_DNA"/>
</dbReference>
<dbReference type="RefSeq" id="NP_457754.1">
    <property type="nucleotide sequence ID" value="NC_003198.1"/>
</dbReference>
<dbReference type="RefSeq" id="WP_001241496.1">
    <property type="nucleotide sequence ID" value="NZ_WSUR01000038.1"/>
</dbReference>
<dbReference type="SMR" id="Q8Z3D4"/>
<dbReference type="STRING" id="220341.gene:17587406"/>
<dbReference type="KEGG" id="stt:t3293"/>
<dbReference type="KEGG" id="sty:STY3558"/>
<dbReference type="PATRIC" id="fig|220341.7.peg.3622"/>
<dbReference type="eggNOG" id="COG2717">
    <property type="taxonomic scope" value="Bacteria"/>
</dbReference>
<dbReference type="HOGENOM" id="CLU_080662_1_0_6"/>
<dbReference type="OMA" id="LHFFWMR"/>
<dbReference type="OrthoDB" id="9788328at2"/>
<dbReference type="Proteomes" id="UP000000541">
    <property type="component" value="Chromosome"/>
</dbReference>
<dbReference type="Proteomes" id="UP000002670">
    <property type="component" value="Chromosome"/>
</dbReference>
<dbReference type="GO" id="GO:0005886">
    <property type="term" value="C:plasma membrane"/>
    <property type="evidence" value="ECO:0007669"/>
    <property type="project" value="UniProtKB-SubCell"/>
</dbReference>
<dbReference type="GO" id="GO:0009055">
    <property type="term" value="F:electron transfer activity"/>
    <property type="evidence" value="ECO:0007669"/>
    <property type="project" value="UniProtKB-UniRule"/>
</dbReference>
<dbReference type="GO" id="GO:0010181">
    <property type="term" value="F:FMN binding"/>
    <property type="evidence" value="ECO:0007669"/>
    <property type="project" value="UniProtKB-UniRule"/>
</dbReference>
<dbReference type="GO" id="GO:0020037">
    <property type="term" value="F:heme binding"/>
    <property type="evidence" value="ECO:0007669"/>
    <property type="project" value="UniProtKB-UniRule"/>
</dbReference>
<dbReference type="GO" id="GO:0046872">
    <property type="term" value="F:metal ion binding"/>
    <property type="evidence" value="ECO:0007669"/>
    <property type="project" value="UniProtKB-KW"/>
</dbReference>
<dbReference type="GO" id="GO:0016679">
    <property type="term" value="F:oxidoreductase activity, acting on diphenols and related substances as donors"/>
    <property type="evidence" value="ECO:0007669"/>
    <property type="project" value="TreeGrafter"/>
</dbReference>
<dbReference type="GO" id="GO:0030091">
    <property type="term" value="P:protein repair"/>
    <property type="evidence" value="ECO:0007669"/>
    <property type="project" value="UniProtKB-UniRule"/>
</dbReference>
<dbReference type="HAMAP" id="MF_01207">
    <property type="entry name" value="MsrQ"/>
    <property type="match status" value="1"/>
</dbReference>
<dbReference type="InterPro" id="IPR013130">
    <property type="entry name" value="Fe3_Rdtase_TM_dom"/>
</dbReference>
<dbReference type="InterPro" id="IPR022837">
    <property type="entry name" value="MsrQ-like"/>
</dbReference>
<dbReference type="NCBIfam" id="NF003832">
    <property type="entry name" value="PRK05419.1-4"/>
    <property type="match status" value="1"/>
</dbReference>
<dbReference type="PANTHER" id="PTHR36964">
    <property type="entry name" value="PROTEIN-METHIONINE-SULFOXIDE REDUCTASE HEME-BINDING SUBUNIT MSRQ"/>
    <property type="match status" value="1"/>
</dbReference>
<dbReference type="PANTHER" id="PTHR36964:SF1">
    <property type="entry name" value="PROTEIN-METHIONINE-SULFOXIDE REDUCTASE HEME-BINDING SUBUNIT MSRQ"/>
    <property type="match status" value="1"/>
</dbReference>
<dbReference type="Pfam" id="PF01794">
    <property type="entry name" value="Ferric_reduct"/>
    <property type="match status" value="1"/>
</dbReference>
<accession>Q8Z3D4</accession>
<comment type="function">
    <text evidence="1">Part of the MsrPQ system that repairs oxidized periplasmic proteins containing methionine sulfoxide residues (Met-O), using respiratory chain electrons. Thus protects these proteins from oxidative-stress damage caused by reactive species of oxygen and chlorine generated by the host defense mechanisms. MsrPQ is essential for the maintenance of envelope integrity under bleach stress, rescuing a wide series of structurally unrelated periplasmic proteins from methionine oxidation, including the primary periplasmic chaperone SurA and the lipoprotein Pal. MsrQ provides electrons for reduction to the reductase catalytic subunit MsrP, using the quinone pool of the respiratory chain.</text>
</comment>
<comment type="cofactor">
    <cofactor evidence="1">
        <name>FMN</name>
        <dbReference type="ChEBI" id="CHEBI:58210"/>
    </cofactor>
    <text evidence="1">Binds 1 FMN per subunit.</text>
</comment>
<comment type="cofactor">
    <cofactor evidence="1">
        <name>heme b</name>
        <dbReference type="ChEBI" id="CHEBI:60344"/>
    </cofactor>
    <text evidence="1">Binds 1 heme b (iron(II)-protoporphyrin IX) group per subunit.</text>
</comment>
<comment type="subunit">
    <text evidence="1">Heterodimer of a catalytic subunit (MsrP) and a heme-binding subunit (MsrQ).</text>
</comment>
<comment type="subcellular location">
    <subcellularLocation>
        <location evidence="1">Cell inner membrane</location>
        <topology evidence="1">Multi-pass membrane protein</topology>
    </subcellularLocation>
</comment>
<comment type="similarity">
    <text evidence="1">Belongs to the MsrQ family.</text>
</comment>
<evidence type="ECO:0000255" key="1">
    <source>
        <dbReference type="HAMAP-Rule" id="MF_01207"/>
    </source>
</evidence>
<gene>
    <name evidence="1" type="primary">msrQ</name>
    <name type="ordered locus">STY3558</name>
    <name type="ordered locus">t3293</name>
</gene>
<keyword id="KW-0997">Cell inner membrane</keyword>
<keyword id="KW-1003">Cell membrane</keyword>
<keyword id="KW-0249">Electron transport</keyword>
<keyword id="KW-0285">Flavoprotein</keyword>
<keyword id="KW-0288">FMN</keyword>
<keyword id="KW-0349">Heme</keyword>
<keyword id="KW-0408">Iron</keyword>
<keyword id="KW-0472">Membrane</keyword>
<keyword id="KW-0479">Metal-binding</keyword>
<keyword id="KW-0812">Transmembrane</keyword>
<keyword id="KW-1133">Transmembrane helix</keyword>
<keyword id="KW-0813">Transport</keyword>